<proteinExistence type="inferred from homology"/>
<evidence type="ECO:0000255" key="1">
    <source>
        <dbReference type="HAMAP-Rule" id="MF_01337"/>
    </source>
</evidence>
<evidence type="ECO:0000256" key="2">
    <source>
        <dbReference type="SAM" id="MobiDB-lite"/>
    </source>
</evidence>
<evidence type="ECO:0000305" key="3"/>
<comment type="function">
    <text evidence="1">This is one of the proteins that bind and probably mediate the attachment of the 5S RNA into the large ribosomal subunit, where it forms part of the central protuberance.</text>
</comment>
<comment type="subunit">
    <text evidence="1">Part of the 50S ribosomal subunit; part of the 5S rRNA/L5/L18/L25 subcomplex. Contacts the 5S and 23S rRNAs.</text>
</comment>
<comment type="similarity">
    <text evidence="1">Belongs to the universal ribosomal protein uL18 family.</text>
</comment>
<name>RL18_CHLCH</name>
<reference key="1">
    <citation type="submission" date="2005-08" db="EMBL/GenBank/DDBJ databases">
        <title>Complete sequence of Chlorobium chlorochromatii CaD3.</title>
        <authorList>
            <consortium name="US DOE Joint Genome Institute"/>
            <person name="Copeland A."/>
            <person name="Lucas S."/>
            <person name="Lapidus A."/>
            <person name="Barry K."/>
            <person name="Detter J.C."/>
            <person name="Glavina T."/>
            <person name="Hammon N."/>
            <person name="Israni S."/>
            <person name="Pitluck S."/>
            <person name="Bryant D."/>
            <person name="Schmutz J."/>
            <person name="Larimer F."/>
            <person name="Land M."/>
            <person name="Kyrpides N."/>
            <person name="Ivanova N."/>
            <person name="Richardson P."/>
        </authorList>
    </citation>
    <scope>NUCLEOTIDE SEQUENCE [LARGE SCALE GENOMIC DNA]</scope>
    <source>
        <strain>CaD3</strain>
    </source>
</reference>
<dbReference type="EMBL" id="CP000108">
    <property type="protein sequence ID" value="ABB29086.1"/>
    <property type="molecule type" value="Genomic_DNA"/>
</dbReference>
<dbReference type="SMR" id="Q3API9"/>
<dbReference type="STRING" id="340177.Cag_1835"/>
<dbReference type="KEGG" id="cch:Cag_1835"/>
<dbReference type="eggNOG" id="COG0256">
    <property type="taxonomic scope" value="Bacteria"/>
</dbReference>
<dbReference type="HOGENOM" id="CLU_098841_0_1_10"/>
<dbReference type="OrthoDB" id="9810939at2"/>
<dbReference type="GO" id="GO:0005737">
    <property type="term" value="C:cytoplasm"/>
    <property type="evidence" value="ECO:0007669"/>
    <property type="project" value="UniProtKB-ARBA"/>
</dbReference>
<dbReference type="GO" id="GO:1990904">
    <property type="term" value="C:ribonucleoprotein complex"/>
    <property type="evidence" value="ECO:0007669"/>
    <property type="project" value="UniProtKB-KW"/>
</dbReference>
<dbReference type="GO" id="GO:0005840">
    <property type="term" value="C:ribosome"/>
    <property type="evidence" value="ECO:0007669"/>
    <property type="project" value="UniProtKB-KW"/>
</dbReference>
<dbReference type="GO" id="GO:0008097">
    <property type="term" value="F:5S rRNA binding"/>
    <property type="evidence" value="ECO:0007669"/>
    <property type="project" value="TreeGrafter"/>
</dbReference>
<dbReference type="GO" id="GO:0003735">
    <property type="term" value="F:structural constituent of ribosome"/>
    <property type="evidence" value="ECO:0007669"/>
    <property type="project" value="InterPro"/>
</dbReference>
<dbReference type="GO" id="GO:0006412">
    <property type="term" value="P:translation"/>
    <property type="evidence" value="ECO:0007669"/>
    <property type="project" value="UniProtKB-UniRule"/>
</dbReference>
<dbReference type="CDD" id="cd00432">
    <property type="entry name" value="Ribosomal_L18_L5e"/>
    <property type="match status" value="1"/>
</dbReference>
<dbReference type="FunFam" id="3.30.420.100:FF:000001">
    <property type="entry name" value="50S ribosomal protein L18"/>
    <property type="match status" value="1"/>
</dbReference>
<dbReference type="Gene3D" id="3.30.420.100">
    <property type="match status" value="1"/>
</dbReference>
<dbReference type="HAMAP" id="MF_01337_B">
    <property type="entry name" value="Ribosomal_uL18_B"/>
    <property type="match status" value="1"/>
</dbReference>
<dbReference type="InterPro" id="IPR004389">
    <property type="entry name" value="Ribosomal_uL18_bac-type"/>
</dbReference>
<dbReference type="InterPro" id="IPR005484">
    <property type="entry name" value="Ribosomal_uL18_bac/euk"/>
</dbReference>
<dbReference type="NCBIfam" id="TIGR00060">
    <property type="entry name" value="L18_bact"/>
    <property type="match status" value="1"/>
</dbReference>
<dbReference type="PANTHER" id="PTHR12899">
    <property type="entry name" value="39S RIBOSOMAL PROTEIN L18, MITOCHONDRIAL"/>
    <property type="match status" value="1"/>
</dbReference>
<dbReference type="PANTHER" id="PTHR12899:SF3">
    <property type="entry name" value="LARGE RIBOSOMAL SUBUNIT PROTEIN UL18M"/>
    <property type="match status" value="1"/>
</dbReference>
<dbReference type="Pfam" id="PF00861">
    <property type="entry name" value="Ribosomal_L18p"/>
    <property type="match status" value="1"/>
</dbReference>
<dbReference type="SUPFAM" id="SSF53137">
    <property type="entry name" value="Translational machinery components"/>
    <property type="match status" value="1"/>
</dbReference>
<organism>
    <name type="scientific">Chlorobium chlorochromatii (strain CaD3)</name>
    <dbReference type="NCBI Taxonomy" id="340177"/>
    <lineage>
        <taxon>Bacteria</taxon>
        <taxon>Pseudomonadati</taxon>
        <taxon>Chlorobiota</taxon>
        <taxon>Chlorobiia</taxon>
        <taxon>Chlorobiales</taxon>
        <taxon>Chlorobiaceae</taxon>
        <taxon>Chlorobium/Pelodictyon group</taxon>
        <taxon>Chlorobium</taxon>
    </lineage>
</organism>
<feature type="chain" id="PRO_0000251300" description="Large ribosomal subunit protein uL18">
    <location>
        <begin position="1"/>
        <end position="119"/>
    </location>
</feature>
<feature type="region of interest" description="Disordered" evidence="2">
    <location>
        <begin position="1"/>
        <end position="23"/>
    </location>
</feature>
<protein>
    <recommendedName>
        <fullName evidence="1">Large ribosomal subunit protein uL18</fullName>
    </recommendedName>
    <alternativeName>
        <fullName evidence="3">50S ribosomal protein L18</fullName>
    </alternativeName>
</protein>
<keyword id="KW-0687">Ribonucleoprotein</keyword>
<keyword id="KW-0689">Ribosomal protein</keyword>
<keyword id="KW-0694">RNA-binding</keyword>
<keyword id="KW-0699">rRNA-binding</keyword>
<accession>Q3API9</accession>
<sequence>MSQVDKAARRQKIKDRSRVSVQGTASKPRLCIYRSLAEMYAQLIDDVNGKTLVTASTMTKNNKAFEGTKSDASRIVGQQIAEKALAAGITNVVFDRNGFRYHGRVKALADGAREAGLIF</sequence>
<gene>
    <name evidence="1" type="primary">rplR</name>
    <name type="ordered locus">Cag_1835</name>
</gene>